<evidence type="ECO:0000255" key="1">
    <source>
        <dbReference type="HAMAP-Rule" id="MF_01235"/>
    </source>
</evidence>
<gene>
    <name evidence="1" type="primary">nanE</name>
    <name type="ordered locus">YPTB2741</name>
</gene>
<organism>
    <name type="scientific">Yersinia pseudotuberculosis serotype I (strain IP32953)</name>
    <dbReference type="NCBI Taxonomy" id="273123"/>
    <lineage>
        <taxon>Bacteria</taxon>
        <taxon>Pseudomonadati</taxon>
        <taxon>Pseudomonadota</taxon>
        <taxon>Gammaproteobacteria</taxon>
        <taxon>Enterobacterales</taxon>
        <taxon>Yersiniaceae</taxon>
        <taxon>Yersinia</taxon>
    </lineage>
</organism>
<dbReference type="EC" id="5.1.3.9" evidence="1"/>
<dbReference type="EMBL" id="BX936398">
    <property type="protein sequence ID" value="CAH21979.1"/>
    <property type="molecule type" value="Genomic_DNA"/>
</dbReference>
<dbReference type="SMR" id="Q668J7"/>
<dbReference type="KEGG" id="ypo:BZ17_3888"/>
<dbReference type="KEGG" id="yps:YPTB2741"/>
<dbReference type="PATRIC" id="fig|273123.14.peg.4088"/>
<dbReference type="UniPathway" id="UPA00629">
    <property type="reaction ID" value="UER00682"/>
</dbReference>
<dbReference type="Proteomes" id="UP000001011">
    <property type="component" value="Chromosome"/>
</dbReference>
<dbReference type="GO" id="GO:0005829">
    <property type="term" value="C:cytosol"/>
    <property type="evidence" value="ECO:0007669"/>
    <property type="project" value="TreeGrafter"/>
</dbReference>
<dbReference type="GO" id="GO:0047465">
    <property type="term" value="F:N-acylglucosamine-6-phosphate 2-epimerase activity"/>
    <property type="evidence" value="ECO:0007669"/>
    <property type="project" value="UniProtKB-EC"/>
</dbReference>
<dbReference type="GO" id="GO:0005975">
    <property type="term" value="P:carbohydrate metabolic process"/>
    <property type="evidence" value="ECO:0007669"/>
    <property type="project" value="UniProtKB-UniRule"/>
</dbReference>
<dbReference type="GO" id="GO:0006053">
    <property type="term" value="P:N-acetylmannosamine catabolic process"/>
    <property type="evidence" value="ECO:0007669"/>
    <property type="project" value="TreeGrafter"/>
</dbReference>
<dbReference type="GO" id="GO:0019262">
    <property type="term" value="P:N-acetylneuraminate catabolic process"/>
    <property type="evidence" value="ECO:0007669"/>
    <property type="project" value="UniProtKB-UniRule"/>
</dbReference>
<dbReference type="CDD" id="cd04729">
    <property type="entry name" value="NanE"/>
    <property type="match status" value="1"/>
</dbReference>
<dbReference type="FunFam" id="3.20.20.70:FF:000035">
    <property type="entry name" value="Putative N-acetylmannosamine-6-phosphate 2-epimerase"/>
    <property type="match status" value="1"/>
</dbReference>
<dbReference type="Gene3D" id="3.20.20.70">
    <property type="entry name" value="Aldolase class I"/>
    <property type="match status" value="1"/>
</dbReference>
<dbReference type="HAMAP" id="MF_01235">
    <property type="entry name" value="ManNAc6P_epimer"/>
    <property type="match status" value="1"/>
</dbReference>
<dbReference type="InterPro" id="IPR013785">
    <property type="entry name" value="Aldolase_TIM"/>
</dbReference>
<dbReference type="InterPro" id="IPR007260">
    <property type="entry name" value="NanE"/>
</dbReference>
<dbReference type="InterPro" id="IPR011060">
    <property type="entry name" value="RibuloseP-bd_barrel"/>
</dbReference>
<dbReference type="NCBIfam" id="NF002231">
    <property type="entry name" value="PRK01130.1"/>
    <property type="match status" value="1"/>
</dbReference>
<dbReference type="PANTHER" id="PTHR36204">
    <property type="entry name" value="N-ACETYLMANNOSAMINE-6-PHOSPHATE 2-EPIMERASE-RELATED"/>
    <property type="match status" value="1"/>
</dbReference>
<dbReference type="PANTHER" id="PTHR36204:SF1">
    <property type="entry name" value="N-ACETYLMANNOSAMINE-6-PHOSPHATE 2-EPIMERASE-RELATED"/>
    <property type="match status" value="1"/>
</dbReference>
<dbReference type="Pfam" id="PF04131">
    <property type="entry name" value="NanE"/>
    <property type="match status" value="1"/>
</dbReference>
<dbReference type="SUPFAM" id="SSF51366">
    <property type="entry name" value="Ribulose-phoshate binding barrel"/>
    <property type="match status" value="1"/>
</dbReference>
<feature type="chain" id="PRO_0000179822" description="Putative N-acetylmannosamine-6-phosphate 2-epimerase">
    <location>
        <begin position="1"/>
        <end position="233"/>
    </location>
</feature>
<accession>Q668J7</accession>
<proteinExistence type="inferred from homology"/>
<comment type="function">
    <text evidence="1">Converts N-acetylmannosamine-6-phosphate (ManNAc-6-P) to N-acetylglucosamine-6-phosphate (GlcNAc-6-P).</text>
</comment>
<comment type="catalytic activity">
    <reaction evidence="1">
        <text>an N-acyl-D-glucosamine 6-phosphate = an N-acyl-D-mannosamine 6-phosphate</text>
        <dbReference type="Rhea" id="RHEA:23932"/>
        <dbReference type="ChEBI" id="CHEBI:57599"/>
        <dbReference type="ChEBI" id="CHEBI:57666"/>
        <dbReference type="EC" id="5.1.3.9"/>
    </reaction>
</comment>
<comment type="pathway">
    <text evidence="1">Amino-sugar metabolism; N-acetylneuraminate degradation; D-fructose 6-phosphate from N-acetylneuraminate: step 3/5.</text>
</comment>
<comment type="similarity">
    <text evidence="1">Belongs to the NanE family.</text>
</comment>
<protein>
    <recommendedName>
        <fullName evidence="1">Putative N-acetylmannosamine-6-phosphate 2-epimerase</fullName>
        <ecNumber evidence="1">5.1.3.9</ecNumber>
    </recommendedName>
    <alternativeName>
        <fullName evidence="1">ManNAc-6-P epimerase</fullName>
    </alternativeName>
</protein>
<keyword id="KW-0119">Carbohydrate metabolism</keyword>
<keyword id="KW-0413">Isomerase</keyword>
<name>NANE_YERPS</name>
<reference key="1">
    <citation type="journal article" date="2004" name="Proc. Natl. Acad. Sci. U.S.A.">
        <title>Insights into the evolution of Yersinia pestis through whole-genome comparison with Yersinia pseudotuberculosis.</title>
        <authorList>
            <person name="Chain P.S.G."/>
            <person name="Carniel E."/>
            <person name="Larimer F.W."/>
            <person name="Lamerdin J."/>
            <person name="Stoutland P.O."/>
            <person name="Regala W.M."/>
            <person name="Georgescu A.M."/>
            <person name="Vergez L.M."/>
            <person name="Land M.L."/>
            <person name="Motin V.L."/>
            <person name="Brubaker R.R."/>
            <person name="Fowler J."/>
            <person name="Hinnebusch J."/>
            <person name="Marceau M."/>
            <person name="Medigue C."/>
            <person name="Simonet M."/>
            <person name="Chenal-Francisque V."/>
            <person name="Souza B."/>
            <person name="Dacheux D."/>
            <person name="Elliott J.M."/>
            <person name="Derbise A."/>
            <person name="Hauser L.J."/>
            <person name="Garcia E."/>
        </authorList>
    </citation>
    <scope>NUCLEOTIDE SEQUENCE [LARGE SCALE GENOMIC DNA]</scope>
    <source>
        <strain>IP32953</strain>
    </source>
</reference>
<sequence length="233" mass="24471">MSNLSNLRHKLQNGLIASCQPVPGSAMDTPEIVAAMACAALAGGAVGLRIEGISNIQAVRRATDAPIIGIIKRDLPDSEVRITPWLEDIDALSAAGADIIAFDVTCRERPVSVADLYQRARATGCLTMADASNIDDGLLAHHLGIDFIGTTLSGYTQAIVPTEPDLALVTQLAQAGCRVIAEGRYHSPALAAAAISAGAYAVTVGSAITRIEHICGWFCDAIKQCETEKLTEY</sequence>